<feature type="chain" id="PRO_1000099039" description="NH(3)-dependent NAD(+) synthetase">
    <location>
        <begin position="1"/>
        <end position="275"/>
    </location>
</feature>
<feature type="binding site" evidence="1">
    <location>
        <begin position="46"/>
        <end position="53"/>
    </location>
    <ligand>
        <name>ATP</name>
        <dbReference type="ChEBI" id="CHEBI:30616"/>
    </ligand>
</feature>
<feature type="binding site" evidence="1">
    <location>
        <position position="52"/>
    </location>
    <ligand>
        <name>Mg(2+)</name>
        <dbReference type="ChEBI" id="CHEBI:18420"/>
    </ligand>
</feature>
<feature type="binding site" evidence="1">
    <location>
        <position position="140"/>
    </location>
    <ligand>
        <name>deamido-NAD(+)</name>
        <dbReference type="ChEBI" id="CHEBI:58437"/>
    </ligand>
</feature>
<feature type="binding site" evidence="1">
    <location>
        <position position="160"/>
    </location>
    <ligand>
        <name>ATP</name>
        <dbReference type="ChEBI" id="CHEBI:30616"/>
    </ligand>
</feature>
<feature type="binding site" evidence="1">
    <location>
        <position position="165"/>
    </location>
    <ligand>
        <name>Mg(2+)</name>
        <dbReference type="ChEBI" id="CHEBI:18420"/>
    </ligand>
</feature>
<feature type="binding site" evidence="1">
    <location>
        <position position="173"/>
    </location>
    <ligand>
        <name>deamido-NAD(+)</name>
        <dbReference type="ChEBI" id="CHEBI:58437"/>
    </ligand>
</feature>
<feature type="binding site" evidence="1">
    <location>
        <position position="180"/>
    </location>
    <ligand>
        <name>deamido-NAD(+)</name>
        <dbReference type="ChEBI" id="CHEBI:58437"/>
    </ligand>
</feature>
<feature type="binding site" evidence="1">
    <location>
        <position position="189"/>
    </location>
    <ligand>
        <name>ATP</name>
        <dbReference type="ChEBI" id="CHEBI:30616"/>
    </ligand>
</feature>
<feature type="binding site" evidence="1">
    <location>
        <position position="211"/>
    </location>
    <ligand>
        <name>ATP</name>
        <dbReference type="ChEBI" id="CHEBI:30616"/>
    </ligand>
</feature>
<feature type="binding site" evidence="1">
    <location>
        <begin position="260"/>
        <end position="261"/>
    </location>
    <ligand>
        <name>deamido-NAD(+)</name>
        <dbReference type="ChEBI" id="CHEBI:58437"/>
    </ligand>
</feature>
<evidence type="ECO:0000255" key="1">
    <source>
        <dbReference type="HAMAP-Rule" id="MF_00193"/>
    </source>
</evidence>
<protein>
    <recommendedName>
        <fullName evidence="1">NH(3)-dependent NAD(+) synthetase</fullName>
        <ecNumber evidence="1">6.3.1.5</ecNumber>
    </recommendedName>
</protein>
<keyword id="KW-0067">ATP-binding</keyword>
<keyword id="KW-0436">Ligase</keyword>
<keyword id="KW-0460">Magnesium</keyword>
<keyword id="KW-0479">Metal-binding</keyword>
<keyword id="KW-0520">NAD</keyword>
<keyword id="KW-0547">Nucleotide-binding</keyword>
<gene>
    <name evidence="1" type="primary">nadE</name>
    <name type="ordered locus">SEN1733</name>
</gene>
<dbReference type="EC" id="6.3.1.5" evidence="1"/>
<dbReference type="EMBL" id="AM933172">
    <property type="protein sequence ID" value="CAR33314.1"/>
    <property type="molecule type" value="Genomic_DNA"/>
</dbReference>
<dbReference type="RefSeq" id="WP_000174977.1">
    <property type="nucleotide sequence ID" value="NC_011294.1"/>
</dbReference>
<dbReference type="SMR" id="B5QWI3"/>
<dbReference type="KEGG" id="set:SEN1733"/>
<dbReference type="HOGENOM" id="CLU_059327_3_0_6"/>
<dbReference type="UniPathway" id="UPA00253">
    <property type="reaction ID" value="UER00333"/>
</dbReference>
<dbReference type="Proteomes" id="UP000000613">
    <property type="component" value="Chromosome"/>
</dbReference>
<dbReference type="GO" id="GO:0005737">
    <property type="term" value="C:cytoplasm"/>
    <property type="evidence" value="ECO:0007669"/>
    <property type="project" value="InterPro"/>
</dbReference>
<dbReference type="GO" id="GO:0005524">
    <property type="term" value="F:ATP binding"/>
    <property type="evidence" value="ECO:0007669"/>
    <property type="project" value="UniProtKB-UniRule"/>
</dbReference>
<dbReference type="GO" id="GO:0004359">
    <property type="term" value="F:glutaminase activity"/>
    <property type="evidence" value="ECO:0007669"/>
    <property type="project" value="InterPro"/>
</dbReference>
<dbReference type="GO" id="GO:0046872">
    <property type="term" value="F:metal ion binding"/>
    <property type="evidence" value="ECO:0007669"/>
    <property type="project" value="UniProtKB-KW"/>
</dbReference>
<dbReference type="GO" id="GO:0003952">
    <property type="term" value="F:NAD+ synthase (glutamine-hydrolyzing) activity"/>
    <property type="evidence" value="ECO:0007669"/>
    <property type="project" value="InterPro"/>
</dbReference>
<dbReference type="GO" id="GO:0008795">
    <property type="term" value="F:NAD+ synthase activity"/>
    <property type="evidence" value="ECO:0007669"/>
    <property type="project" value="UniProtKB-UniRule"/>
</dbReference>
<dbReference type="GO" id="GO:0009435">
    <property type="term" value="P:NAD biosynthetic process"/>
    <property type="evidence" value="ECO:0007669"/>
    <property type="project" value="UniProtKB-UniRule"/>
</dbReference>
<dbReference type="CDD" id="cd00553">
    <property type="entry name" value="NAD_synthase"/>
    <property type="match status" value="1"/>
</dbReference>
<dbReference type="FunFam" id="3.40.50.620:FF:000015">
    <property type="entry name" value="NH(3)-dependent NAD(+) synthetase"/>
    <property type="match status" value="1"/>
</dbReference>
<dbReference type="Gene3D" id="3.40.50.620">
    <property type="entry name" value="HUPs"/>
    <property type="match status" value="1"/>
</dbReference>
<dbReference type="HAMAP" id="MF_00193">
    <property type="entry name" value="NadE_ammonia_dep"/>
    <property type="match status" value="1"/>
</dbReference>
<dbReference type="InterPro" id="IPR022310">
    <property type="entry name" value="NAD/GMP_synthase"/>
</dbReference>
<dbReference type="InterPro" id="IPR003694">
    <property type="entry name" value="NAD_synthase"/>
</dbReference>
<dbReference type="InterPro" id="IPR022926">
    <property type="entry name" value="NH(3)-dep_NAD(+)_synth"/>
</dbReference>
<dbReference type="InterPro" id="IPR014729">
    <property type="entry name" value="Rossmann-like_a/b/a_fold"/>
</dbReference>
<dbReference type="NCBIfam" id="TIGR00552">
    <property type="entry name" value="nadE"/>
    <property type="match status" value="1"/>
</dbReference>
<dbReference type="NCBIfam" id="NF001979">
    <property type="entry name" value="PRK00768.1"/>
    <property type="match status" value="1"/>
</dbReference>
<dbReference type="PANTHER" id="PTHR23090">
    <property type="entry name" value="NH 3 /GLUTAMINE-DEPENDENT NAD + SYNTHETASE"/>
    <property type="match status" value="1"/>
</dbReference>
<dbReference type="PANTHER" id="PTHR23090:SF7">
    <property type="entry name" value="NH(3)-DEPENDENT NAD(+) SYNTHETASE"/>
    <property type="match status" value="1"/>
</dbReference>
<dbReference type="Pfam" id="PF02540">
    <property type="entry name" value="NAD_synthase"/>
    <property type="match status" value="1"/>
</dbReference>
<dbReference type="SUPFAM" id="SSF52402">
    <property type="entry name" value="Adenine nucleotide alpha hydrolases-like"/>
    <property type="match status" value="1"/>
</dbReference>
<organism>
    <name type="scientific">Salmonella enteritidis PT4 (strain P125109)</name>
    <dbReference type="NCBI Taxonomy" id="550537"/>
    <lineage>
        <taxon>Bacteria</taxon>
        <taxon>Pseudomonadati</taxon>
        <taxon>Pseudomonadota</taxon>
        <taxon>Gammaproteobacteria</taxon>
        <taxon>Enterobacterales</taxon>
        <taxon>Enterobacteriaceae</taxon>
        <taxon>Salmonella</taxon>
    </lineage>
</organism>
<name>NADE_SALEP</name>
<comment type="function">
    <text evidence="1">Catalyzes the ATP-dependent amidation of deamido-NAD to form NAD. Uses ammonia as a nitrogen source.</text>
</comment>
<comment type="catalytic activity">
    <reaction evidence="1">
        <text>deamido-NAD(+) + NH4(+) + ATP = AMP + diphosphate + NAD(+) + H(+)</text>
        <dbReference type="Rhea" id="RHEA:21188"/>
        <dbReference type="ChEBI" id="CHEBI:15378"/>
        <dbReference type="ChEBI" id="CHEBI:28938"/>
        <dbReference type="ChEBI" id="CHEBI:30616"/>
        <dbReference type="ChEBI" id="CHEBI:33019"/>
        <dbReference type="ChEBI" id="CHEBI:57540"/>
        <dbReference type="ChEBI" id="CHEBI:58437"/>
        <dbReference type="ChEBI" id="CHEBI:456215"/>
        <dbReference type="EC" id="6.3.1.5"/>
    </reaction>
</comment>
<comment type="pathway">
    <text evidence="1">Cofactor biosynthesis; NAD(+) biosynthesis; NAD(+) from deamido-NAD(+) (ammonia route): step 1/1.</text>
</comment>
<comment type="subunit">
    <text evidence="1">Homodimer.</text>
</comment>
<comment type="similarity">
    <text evidence="1">Belongs to the NAD synthetase family.</text>
</comment>
<sequence>MTLQQEIIQALGAKPHINPEEEIRRSVDFLKAYLETYPFLKSLVLGISGGQDSTLAGKLSQMAIAELREETGDNALQFIAVRLPYGVQADEQDCQDAIAFIQPDRVLTVNIKGAVLASEQALREAGIELSDFVRGNEKARERMKAQYSIAGMTHGVVVGTDHAAEAITGFFTKYGDGGTDINPLHRLNKRQGKQLLAALGCPEHLYKKVPTADLEDDRPSLPDEAALGVTYDNIDDYLEGKTLDPAIAKTIEGWYVKTEHKRRLPITVFDDFWKR</sequence>
<reference key="1">
    <citation type="journal article" date="2008" name="Genome Res.">
        <title>Comparative genome analysis of Salmonella enteritidis PT4 and Salmonella gallinarum 287/91 provides insights into evolutionary and host adaptation pathways.</title>
        <authorList>
            <person name="Thomson N.R."/>
            <person name="Clayton D.J."/>
            <person name="Windhorst D."/>
            <person name="Vernikos G."/>
            <person name="Davidson S."/>
            <person name="Churcher C."/>
            <person name="Quail M.A."/>
            <person name="Stevens M."/>
            <person name="Jones M.A."/>
            <person name="Watson M."/>
            <person name="Barron A."/>
            <person name="Layton A."/>
            <person name="Pickard D."/>
            <person name="Kingsley R.A."/>
            <person name="Bignell A."/>
            <person name="Clark L."/>
            <person name="Harris B."/>
            <person name="Ormond D."/>
            <person name="Abdellah Z."/>
            <person name="Brooks K."/>
            <person name="Cherevach I."/>
            <person name="Chillingworth T."/>
            <person name="Woodward J."/>
            <person name="Norberczak H."/>
            <person name="Lord A."/>
            <person name="Arrowsmith C."/>
            <person name="Jagels K."/>
            <person name="Moule S."/>
            <person name="Mungall K."/>
            <person name="Saunders M."/>
            <person name="Whitehead S."/>
            <person name="Chabalgoity J.A."/>
            <person name="Maskell D."/>
            <person name="Humphreys T."/>
            <person name="Roberts M."/>
            <person name="Barrow P.A."/>
            <person name="Dougan G."/>
            <person name="Parkhill J."/>
        </authorList>
    </citation>
    <scope>NUCLEOTIDE SEQUENCE [LARGE SCALE GENOMIC DNA]</scope>
    <source>
        <strain>P125109</strain>
    </source>
</reference>
<accession>B5QWI3</accession>
<proteinExistence type="inferred from homology"/>